<protein>
    <recommendedName>
        <fullName>Uncharacterized protein MJ0831</fullName>
    </recommendedName>
</protein>
<proteinExistence type="evidence at protein level"/>
<name>Y831_METJA</name>
<accession>Q58241</accession>
<sequence length="432" mass="48835">MMEKLKEIEKVTKAIKEKILNHYGYIRVITHHDTDGLSSGGILAKMLMRTNKLFHLTVVEHLSKEVIEKLAKENEVNKPLFIFADMGSGQIEEIIKHNFNAIILDHHPPVIKDSFINENIIQLNPHIFGVDGSREITASGVCYLVAREFGYYDLSVLAIVGIIGDMQYNPLLGLNKFIVNEAREYRYVKIMNDIVYNIYDVEIYKAIAYCTKPYIPDLASEGKAFKFLKDIGIDPNKKQLDDTDKKKLLSAIIFKYPKIENLLIDRYLIEHKVRDAFLLSEMLNAVGRNGLFAVGIGICLEDDECIKIGNQILWEYKKNLINELKSVKLKKLNNIYYFEGKKGMIGIIASILVDDKPVIGYHIEGDIAKFSARGNRDLVNRGLNLSVAMAVAKEFGGNGGGHDVASGAVVSKDKVQEFLKRVDEIIGEQLRR</sequence>
<keyword id="KW-0002">3D-structure</keyword>
<keyword id="KW-1185">Reference proteome</keyword>
<dbReference type="EMBL" id="L77117">
    <property type="protein sequence ID" value="AAB98830.1"/>
    <property type="molecule type" value="Genomic_DNA"/>
</dbReference>
<dbReference type="PIR" id="G64403">
    <property type="entry name" value="G64403"/>
</dbReference>
<dbReference type="RefSeq" id="WP_010870342.1">
    <property type="nucleotide sequence ID" value="NC_000909.1"/>
</dbReference>
<dbReference type="PDB" id="6TVV">
    <property type="method" value="X-ray"/>
    <property type="resolution" value="2.80 A"/>
    <property type="chains" value="A/B=1-432"/>
</dbReference>
<dbReference type="PDB" id="7YIK">
    <property type="method" value="X-ray"/>
    <property type="resolution" value="2.19 A"/>
    <property type="chains" value="A/B=1-432"/>
</dbReference>
<dbReference type="PDB" id="7YKV">
    <property type="method" value="X-ray"/>
    <property type="resolution" value="2.04 A"/>
    <property type="chains" value="A/B=1-432"/>
</dbReference>
<dbReference type="PDB" id="7YOQ">
    <property type="method" value="X-ray"/>
    <property type="resolution" value="2.27 A"/>
    <property type="chains" value="A/B=1-432"/>
</dbReference>
<dbReference type="PDB" id="7YOR">
    <property type="method" value="X-ray"/>
    <property type="resolution" value="2.53 A"/>
    <property type="chains" value="A/B=1-432"/>
</dbReference>
<dbReference type="PDB" id="7YOS">
    <property type="method" value="X-ray"/>
    <property type="resolution" value="2.17 A"/>
    <property type="chains" value="A/B=1-432"/>
</dbReference>
<dbReference type="PDBsum" id="6TVV"/>
<dbReference type="PDBsum" id="7YIK"/>
<dbReference type="PDBsum" id="7YKV"/>
<dbReference type="PDBsum" id="7YOQ"/>
<dbReference type="PDBsum" id="7YOR"/>
<dbReference type="PDBsum" id="7YOS"/>
<dbReference type="SMR" id="Q58241"/>
<dbReference type="FunCoup" id="Q58241">
    <property type="interactions" value="9"/>
</dbReference>
<dbReference type="STRING" id="243232.MJ_0831"/>
<dbReference type="PaxDb" id="243232-MJ_0831"/>
<dbReference type="EnsemblBacteria" id="AAB98830">
    <property type="protein sequence ID" value="AAB98830"/>
    <property type="gene ID" value="MJ_0831"/>
</dbReference>
<dbReference type="GeneID" id="1451714"/>
<dbReference type="KEGG" id="mja:MJ_0831"/>
<dbReference type="eggNOG" id="arCOG00427">
    <property type="taxonomic scope" value="Archaea"/>
</dbReference>
<dbReference type="HOGENOM" id="CLU_042622_0_0_2"/>
<dbReference type="InParanoid" id="Q58241"/>
<dbReference type="OrthoDB" id="36101at2157"/>
<dbReference type="PhylomeDB" id="Q58241"/>
<dbReference type="Proteomes" id="UP000000805">
    <property type="component" value="Chromosome"/>
</dbReference>
<dbReference type="GO" id="GO:0003676">
    <property type="term" value="F:nucleic acid binding"/>
    <property type="evidence" value="ECO:0007669"/>
    <property type="project" value="InterPro"/>
</dbReference>
<dbReference type="GO" id="GO:0045145">
    <property type="term" value="F:single-stranded DNA 5'-3' DNA exonuclease activity"/>
    <property type="evidence" value="ECO:0000318"/>
    <property type="project" value="GO_Central"/>
</dbReference>
<dbReference type="GO" id="GO:0006310">
    <property type="term" value="P:DNA recombination"/>
    <property type="evidence" value="ECO:0000318"/>
    <property type="project" value="GO_Central"/>
</dbReference>
<dbReference type="Gene3D" id="3.10.310.30">
    <property type="match status" value="1"/>
</dbReference>
<dbReference type="Gene3D" id="3.90.1640.30">
    <property type="match status" value="1"/>
</dbReference>
<dbReference type="InterPro" id="IPR038763">
    <property type="entry name" value="DHH_sf"/>
</dbReference>
<dbReference type="InterPro" id="IPR003156">
    <property type="entry name" value="DHHA1_dom"/>
</dbReference>
<dbReference type="InterPro" id="IPR051673">
    <property type="entry name" value="SSDNA_exonuclease_RecJ"/>
</dbReference>
<dbReference type="PANTHER" id="PTHR30255">
    <property type="entry name" value="SINGLE-STRANDED-DNA-SPECIFIC EXONUCLEASE RECJ"/>
    <property type="match status" value="1"/>
</dbReference>
<dbReference type="PANTHER" id="PTHR30255:SF2">
    <property type="entry name" value="SINGLE-STRANDED-DNA-SPECIFIC EXONUCLEASE RECJ"/>
    <property type="match status" value="1"/>
</dbReference>
<dbReference type="Pfam" id="PF02272">
    <property type="entry name" value="DHHA1"/>
    <property type="match status" value="1"/>
</dbReference>
<dbReference type="SUPFAM" id="SSF64182">
    <property type="entry name" value="DHH phosphoesterases"/>
    <property type="match status" value="1"/>
</dbReference>
<reference key="1">
    <citation type="journal article" date="1996" name="Science">
        <title>Complete genome sequence of the methanogenic archaeon, Methanococcus jannaschii.</title>
        <authorList>
            <person name="Bult C.J."/>
            <person name="White O."/>
            <person name="Olsen G.J."/>
            <person name="Zhou L."/>
            <person name="Fleischmann R.D."/>
            <person name="Sutton G.G."/>
            <person name="Blake J.A."/>
            <person name="FitzGerald L.M."/>
            <person name="Clayton R.A."/>
            <person name="Gocayne J.D."/>
            <person name="Kerlavage A.R."/>
            <person name="Dougherty B.A."/>
            <person name="Tomb J.-F."/>
            <person name="Adams M.D."/>
            <person name="Reich C.I."/>
            <person name="Overbeek R."/>
            <person name="Kirkness E.F."/>
            <person name="Weinstock K.G."/>
            <person name="Merrick J.M."/>
            <person name="Glodek A."/>
            <person name="Scott J.L."/>
            <person name="Geoghagen N.S.M."/>
            <person name="Weidman J.F."/>
            <person name="Fuhrmann J.L."/>
            <person name="Nguyen D."/>
            <person name="Utterback T.R."/>
            <person name="Kelley J.M."/>
            <person name="Peterson J.D."/>
            <person name="Sadow P.W."/>
            <person name="Hanna M.C."/>
            <person name="Cotton M.D."/>
            <person name="Roberts K.M."/>
            <person name="Hurst M.A."/>
            <person name="Kaine B.P."/>
            <person name="Borodovsky M."/>
            <person name="Klenk H.-P."/>
            <person name="Fraser C.M."/>
            <person name="Smith H.O."/>
            <person name="Woese C.R."/>
            <person name="Venter J.C."/>
        </authorList>
    </citation>
    <scope>NUCLEOTIDE SEQUENCE [LARGE SCALE GENOMIC DNA]</scope>
    <source>
        <strain>ATCC 43067 / DSM 2661 / JAL-1 / JCM 10045 / NBRC 100440</strain>
    </source>
</reference>
<comment type="similarity">
    <text evidence="1">To M.jannaschii MJ0977.</text>
</comment>
<organism>
    <name type="scientific">Methanocaldococcus jannaschii (strain ATCC 43067 / DSM 2661 / JAL-1 / JCM 10045 / NBRC 100440)</name>
    <name type="common">Methanococcus jannaschii</name>
    <dbReference type="NCBI Taxonomy" id="243232"/>
    <lineage>
        <taxon>Archaea</taxon>
        <taxon>Methanobacteriati</taxon>
        <taxon>Methanobacteriota</taxon>
        <taxon>Methanomada group</taxon>
        <taxon>Methanococci</taxon>
        <taxon>Methanococcales</taxon>
        <taxon>Methanocaldococcaceae</taxon>
        <taxon>Methanocaldococcus</taxon>
    </lineage>
</organism>
<feature type="chain" id="PRO_0000107067" description="Uncharacterized protein MJ0831">
    <location>
        <begin position="1"/>
        <end position="432"/>
    </location>
</feature>
<feature type="helix" evidence="2">
    <location>
        <begin position="1"/>
        <end position="20"/>
    </location>
</feature>
<feature type="strand" evidence="2">
    <location>
        <begin position="26"/>
        <end position="30"/>
    </location>
</feature>
<feature type="helix" evidence="2">
    <location>
        <begin position="34"/>
        <end position="49"/>
    </location>
</feature>
<feature type="strand" evidence="2">
    <location>
        <begin position="55"/>
        <end position="58"/>
    </location>
</feature>
<feature type="helix" evidence="2">
    <location>
        <begin position="64"/>
        <end position="71"/>
    </location>
</feature>
<feature type="helix" evidence="2">
    <location>
        <begin position="73"/>
        <end position="76"/>
    </location>
</feature>
<feature type="strand" evidence="2">
    <location>
        <begin position="80"/>
        <end position="85"/>
    </location>
</feature>
<feature type="helix" evidence="2">
    <location>
        <begin position="91"/>
        <end position="97"/>
    </location>
</feature>
<feature type="strand" evidence="2">
    <location>
        <begin position="100"/>
        <end position="104"/>
    </location>
</feature>
<feature type="strand" evidence="2">
    <location>
        <begin position="117"/>
        <end position="123"/>
    </location>
</feature>
<feature type="helix" evidence="2">
    <location>
        <begin position="125"/>
        <end position="128"/>
    </location>
</feature>
<feature type="turn" evidence="2">
    <location>
        <begin position="132"/>
        <end position="134"/>
    </location>
</feature>
<feature type="helix" evidence="2">
    <location>
        <begin position="138"/>
        <end position="146"/>
    </location>
</feature>
<feature type="helix" evidence="2">
    <location>
        <begin position="147"/>
        <end position="149"/>
    </location>
</feature>
<feature type="helix" evidence="2">
    <location>
        <begin position="152"/>
        <end position="154"/>
    </location>
</feature>
<feature type="helix" evidence="2">
    <location>
        <begin position="155"/>
        <end position="164"/>
    </location>
</feature>
<feature type="strand" evidence="3">
    <location>
        <begin position="168"/>
        <end position="170"/>
    </location>
</feature>
<feature type="helix" evidence="2">
    <location>
        <begin position="173"/>
        <end position="184"/>
    </location>
</feature>
<feature type="strand" evidence="2">
    <location>
        <begin position="187"/>
        <end position="194"/>
    </location>
</feature>
<feature type="helix" evidence="2">
    <location>
        <begin position="195"/>
        <end position="198"/>
    </location>
</feature>
<feature type="helix" evidence="2">
    <location>
        <begin position="203"/>
        <end position="208"/>
    </location>
</feature>
<feature type="turn" evidence="3">
    <location>
        <begin position="211"/>
        <end position="214"/>
    </location>
</feature>
<feature type="helix" evidence="2">
    <location>
        <begin position="216"/>
        <end position="218"/>
    </location>
</feature>
<feature type="helix" evidence="2">
    <location>
        <begin position="221"/>
        <end position="230"/>
    </location>
</feature>
<feature type="helix" evidence="2">
    <location>
        <begin position="242"/>
        <end position="255"/>
    </location>
</feature>
<feature type="strand" evidence="2">
    <location>
        <begin position="262"/>
        <end position="273"/>
    </location>
</feature>
<feature type="helix" evidence="2">
    <location>
        <begin position="276"/>
        <end position="288"/>
    </location>
</feature>
<feature type="helix" evidence="2">
    <location>
        <begin position="292"/>
        <end position="299"/>
    </location>
</feature>
<feature type="helix" evidence="2">
    <location>
        <begin position="303"/>
        <end position="326"/>
    </location>
</feature>
<feature type="strand" evidence="2">
    <location>
        <begin position="336"/>
        <end position="339"/>
    </location>
</feature>
<feature type="turn" evidence="2">
    <location>
        <begin position="342"/>
        <end position="344"/>
    </location>
</feature>
<feature type="helix" evidence="2">
    <location>
        <begin position="345"/>
        <end position="352"/>
    </location>
</feature>
<feature type="strand" evidence="2">
    <location>
        <begin position="354"/>
        <end position="356"/>
    </location>
</feature>
<feature type="strand" evidence="2">
    <location>
        <begin position="358"/>
        <end position="364"/>
    </location>
</feature>
<feature type="strand" evidence="2">
    <location>
        <begin position="367"/>
        <end position="373"/>
    </location>
</feature>
<feature type="helix" evidence="2">
    <location>
        <begin position="376"/>
        <end position="380"/>
    </location>
</feature>
<feature type="helix" evidence="2">
    <location>
        <begin position="385"/>
        <end position="390"/>
    </location>
</feature>
<feature type="helix" evidence="2">
    <location>
        <begin position="391"/>
        <end position="395"/>
    </location>
</feature>
<feature type="strand" evidence="2">
    <location>
        <begin position="398"/>
        <end position="401"/>
    </location>
</feature>
<feature type="strand" evidence="2">
    <location>
        <begin position="403"/>
        <end position="411"/>
    </location>
</feature>
<feature type="helix" evidence="2">
    <location>
        <begin position="412"/>
        <end position="414"/>
    </location>
</feature>
<feature type="helix" evidence="2">
    <location>
        <begin position="415"/>
        <end position="429"/>
    </location>
</feature>
<evidence type="ECO:0000305" key="1"/>
<evidence type="ECO:0007829" key="2">
    <source>
        <dbReference type="PDB" id="7YKV"/>
    </source>
</evidence>
<evidence type="ECO:0007829" key="3">
    <source>
        <dbReference type="PDB" id="7YOS"/>
    </source>
</evidence>
<gene>
    <name type="ordered locus">MJ0831</name>
</gene>